<comment type="function">
    <text evidence="2 4">Dihydrolipoamide succinyltransferase (E2) component of the 2-oxoglutarate dehydrogenase complex (By similarity). The 2-oxoglutarate dehydrogenase complex catalyzes the overall conversion of 2-oxoglutarate to succinyl-CoA and CO(2) (By similarity). The 2-oxoglutarate dehydrogenase complex is mainly active in the mitochondrion. A fraction of the 2-oxoglutarate dehydrogenase complex also localizes in the nucleus and is required for lysine succinylation of histones: associates with KAT2A on chromatin and provides succinyl-CoA to histone succinyltransferase KAT2A (By similarity).</text>
</comment>
<comment type="catalytic activity">
    <reaction evidence="2">
        <text>N(6)-[(R)-dihydrolipoyl]-L-lysyl-[protein] + succinyl-CoA = N(6)-[(R)-S(8)-succinyldihydrolipoyl]-L-lysyl-[protein] + CoA</text>
        <dbReference type="Rhea" id="RHEA:15213"/>
        <dbReference type="Rhea" id="RHEA-COMP:10475"/>
        <dbReference type="Rhea" id="RHEA-COMP:20092"/>
        <dbReference type="ChEBI" id="CHEBI:57287"/>
        <dbReference type="ChEBI" id="CHEBI:57292"/>
        <dbReference type="ChEBI" id="CHEBI:83100"/>
        <dbReference type="ChEBI" id="CHEBI:83120"/>
        <dbReference type="EC" id="2.3.1.61"/>
    </reaction>
    <physiologicalReaction direction="right-to-left" evidence="2">
        <dbReference type="Rhea" id="RHEA:15215"/>
    </physiologicalReaction>
</comment>
<comment type="cofactor">
    <cofactor evidence="7">
        <name>(R)-lipoate</name>
        <dbReference type="ChEBI" id="CHEBI:83088"/>
    </cofactor>
    <text evidence="7">Binds 1 lipoyl cofactor covalently.</text>
</comment>
<comment type="pathway">
    <text>Amino-acid degradation; L-lysine degradation via saccharopine pathway; glutaryl-CoA from L-lysine: step 6/6.</text>
</comment>
<comment type="pathway">
    <text evidence="2">Carbohydrate metabolism; tricarboxylic acid cycle.</text>
</comment>
<comment type="subunit">
    <text evidence="2 8">The 2-oxoglutarate dehydrogenase complex is composed of OGDH (2-oxoglutarate dehydrogenase; E1), DLST (dihydrolipoamide succinyltransferase; E2), DLD (dihydrolipoamide dehydrogenase; E3) and the assembly factor KGD4 (PubMed:36854377). It contains multiple copies of the three enzymatic components (E1, E2 and E3). In the nucleus, the 2-oxoglutarate dehydrogenase complex associates with KAT2A. Interacts with ABHD11; this interaction maintains the functional lipoylation of the 2-oxoglutarate dehydrogenase complex (By similarity).</text>
</comment>
<comment type="subcellular location">
    <subcellularLocation>
        <location evidence="2">Mitochondrion matrix</location>
    </subcellularLocation>
    <subcellularLocation>
        <location evidence="2">Nucleus</location>
    </subcellularLocation>
    <text evidence="2">Mainly localizes in the mitochondrion. A small fraction localizes to the nucleus, where the 2-oxoglutarate dehydrogenase complex is required for histone succinylation.</text>
</comment>
<comment type="similarity">
    <text evidence="9">Belongs to the 2-oxoacid dehydrogenase family.</text>
</comment>
<protein>
    <recommendedName>
        <fullName evidence="2">Dihydrolipoyllysine-residue succinyltransferase component of 2-oxoglutarate dehydrogenase complex, mitochondrial</fullName>
        <ecNumber evidence="2">2.3.1.61</ecNumber>
    </recommendedName>
    <alternativeName>
        <fullName>2-oxoglutarate dehydrogenase complex component E2</fullName>
        <shortName>OGDC-E2</shortName>
    </alternativeName>
    <alternativeName>
        <fullName>Dihydrolipoamide succinyltransferase component of 2-oxoglutarate dehydrogenase complex</fullName>
    </alternativeName>
    <alternativeName>
        <fullName>E2K</fullName>
    </alternativeName>
</protein>
<sequence length="455" mass="48973">MLSRSRCASRAFSRSLSAFQKGNCPLVRRSLPGISLCQGPGYPDSRKTVINSSNIFSVRFFRTTAVCKDDVITVKTPAFAESVTEGDVRWEKAVGDTVAEDEVVCEIETDKTSVQVPSPANGVIEALLVPDGGKVEGGTPLFTLRKTGAAPAKAKPAAAPAAAAPKAEPTVSAVPPPPAAPIPTQMPPVPSPSQPLTSKPVSAVKPTAAPPRAEAGAGVGLRSEHREKMNRMRQRIAQRLKEAQNTCAMLTTFNEIDMSNIQEMRARHKDAFLKKHNLKLGFMSAFVKASAFALQEQPVVNAVIDDATKEVVYRDYIDISVAVATPRGLVVPVIRNVETMNYADIERTISELGEKARKNELAIEDMDGGTFTISNGGVFGSLFGTPIINPPQSAILGMHAIVDRPVVIGGKVEVRPMMYVALTYDHRLIDGREAVTFLRKIKAAVEDPRVLLLDL</sequence>
<proteinExistence type="evidence at protein level"/>
<feature type="transit peptide" description="Mitochondrion" evidence="1">
    <location>
        <begin position="1"/>
        <end position="68"/>
    </location>
</feature>
<feature type="chain" id="PRO_0000162252" description="Dihydrolipoyllysine-residue succinyltransferase component of 2-oxoglutarate dehydrogenase complex, mitochondrial">
    <location>
        <begin position="69"/>
        <end position="455"/>
    </location>
</feature>
<feature type="domain" description="Lipoyl-binding" evidence="5">
    <location>
        <begin position="71"/>
        <end position="145"/>
    </location>
</feature>
<feature type="region of interest" description="Disordered" evidence="6">
    <location>
        <begin position="155"/>
        <end position="220"/>
    </location>
</feature>
<feature type="compositionally biased region" description="Low complexity" evidence="6">
    <location>
        <begin position="155"/>
        <end position="173"/>
    </location>
</feature>
<feature type="compositionally biased region" description="Pro residues" evidence="6">
    <location>
        <begin position="174"/>
        <end position="193"/>
    </location>
</feature>
<feature type="active site" evidence="4">
    <location>
        <position position="426"/>
    </location>
</feature>
<feature type="active site" evidence="4">
    <location>
        <position position="430"/>
    </location>
</feature>
<feature type="modified residue" description="Phosphoserine" evidence="3">
    <location>
        <position position="82"/>
    </location>
</feature>
<feature type="modified residue" description="N6-lipoyllysine" evidence="5 7">
    <location>
        <position position="111"/>
    </location>
</feature>
<feature type="modified residue" description="N6-acetyllysine" evidence="3">
    <location>
        <position position="155"/>
    </location>
</feature>
<feature type="modified residue" description="N6-acetyllysine" evidence="3">
    <location>
        <position position="269"/>
    </location>
</feature>
<feature type="modified residue" description="N6-acetyllysine" evidence="3">
    <location>
        <position position="274"/>
    </location>
</feature>
<feature type="modified residue" description="N6-acetyllysine" evidence="3">
    <location>
        <position position="275"/>
    </location>
</feature>
<feature type="modified residue" description="N6-acetyllysine" evidence="3">
    <location>
        <position position="279"/>
    </location>
</feature>
<feature type="modified residue" description="N6-acetyllysine" evidence="3">
    <location>
        <position position="309"/>
    </location>
</feature>
<feature type="strand" evidence="10">
    <location>
        <begin position="226"/>
        <end position="228"/>
    </location>
</feature>
<feature type="helix" evidence="10">
    <location>
        <begin position="231"/>
        <end position="246"/>
    </location>
</feature>
<feature type="strand" evidence="10">
    <location>
        <begin position="249"/>
        <end position="257"/>
    </location>
</feature>
<feature type="helix" evidence="10">
    <location>
        <begin position="259"/>
        <end position="276"/>
    </location>
</feature>
<feature type="helix" evidence="10">
    <location>
        <begin position="283"/>
        <end position="296"/>
    </location>
</feature>
<feature type="helix" evidence="10">
    <location>
        <begin position="298"/>
        <end position="301"/>
    </location>
</feature>
<feature type="strand" evidence="10">
    <location>
        <begin position="303"/>
        <end position="305"/>
    </location>
</feature>
<feature type="turn" evidence="10">
    <location>
        <begin position="306"/>
        <end position="309"/>
    </location>
</feature>
<feature type="strand" evidence="10">
    <location>
        <begin position="310"/>
        <end position="312"/>
    </location>
</feature>
<feature type="strand" evidence="10">
    <location>
        <begin position="319"/>
        <end position="321"/>
    </location>
</feature>
<feature type="strand" evidence="10">
    <location>
        <begin position="323"/>
        <end position="325"/>
    </location>
</feature>
<feature type="strand" evidence="10">
    <location>
        <begin position="328"/>
        <end position="330"/>
    </location>
</feature>
<feature type="helix" evidence="10">
    <location>
        <begin position="337"/>
        <end position="339"/>
    </location>
</feature>
<feature type="helix" evidence="10">
    <location>
        <begin position="342"/>
        <end position="357"/>
    </location>
</feature>
<feature type="helix" evidence="10">
    <location>
        <begin position="363"/>
        <end position="365"/>
    </location>
</feature>
<feature type="strand" evidence="10">
    <location>
        <begin position="370"/>
        <end position="375"/>
    </location>
</feature>
<feature type="helix" evidence="10">
    <location>
        <begin position="377"/>
        <end position="379"/>
    </location>
</feature>
<feature type="strand" evidence="10">
    <location>
        <begin position="392"/>
        <end position="398"/>
    </location>
</feature>
<feature type="strand" evidence="10">
    <location>
        <begin position="402"/>
        <end position="408"/>
    </location>
</feature>
<feature type="strand" evidence="10">
    <location>
        <begin position="411"/>
        <end position="425"/>
    </location>
</feature>
<feature type="turn" evidence="10">
    <location>
        <begin position="426"/>
        <end position="428"/>
    </location>
</feature>
<feature type="helix" evidence="10">
    <location>
        <begin position="431"/>
        <end position="446"/>
    </location>
</feature>
<feature type="helix" evidence="10">
    <location>
        <begin position="450"/>
        <end position="453"/>
    </location>
</feature>
<evidence type="ECO:0000250" key="1"/>
<evidence type="ECO:0000250" key="2">
    <source>
        <dbReference type="UniProtKB" id="P36957"/>
    </source>
</evidence>
<evidence type="ECO:0000250" key="3">
    <source>
        <dbReference type="UniProtKB" id="Q9D2G2"/>
    </source>
</evidence>
<evidence type="ECO:0000250" key="4">
    <source>
        <dbReference type="UniProtKB" id="Q9N0F1"/>
    </source>
</evidence>
<evidence type="ECO:0000255" key="5">
    <source>
        <dbReference type="PROSITE-ProRule" id="PRU01066"/>
    </source>
</evidence>
<evidence type="ECO:0000256" key="6">
    <source>
        <dbReference type="SAM" id="MobiDB-lite"/>
    </source>
</evidence>
<evidence type="ECO:0000269" key="7">
    <source>
    </source>
</evidence>
<evidence type="ECO:0000269" key="8">
    <source>
    </source>
</evidence>
<evidence type="ECO:0000305" key="9"/>
<evidence type="ECO:0007829" key="10">
    <source>
        <dbReference type="PDB" id="7UOL"/>
    </source>
</evidence>
<gene>
    <name evidence="2" type="primary">DLST</name>
</gene>
<name>ODO2_BOVIN</name>
<reference key="1">
    <citation type="journal article" date="2005" name="BMC Genomics">
        <title>Characterization of 954 bovine full-CDS cDNA sequences.</title>
        <authorList>
            <person name="Harhay G.P."/>
            <person name="Sonstegard T.S."/>
            <person name="Keele J.W."/>
            <person name="Heaton M.P."/>
            <person name="Clawson M.L."/>
            <person name="Snelling W.M."/>
            <person name="Wiedmann R.T."/>
            <person name="Van Tassell C.P."/>
            <person name="Smith T.P.L."/>
        </authorList>
    </citation>
    <scope>NUCLEOTIDE SEQUENCE [LARGE SCALE MRNA]</scope>
</reference>
<reference key="2">
    <citation type="journal article" date="1987" name="FEBS Lett.">
        <title>Amino acid sequence surrounding the lipoic acid cofactor of bovine kidney 2-oxoglutarate dehydrogenase complex.</title>
        <authorList>
            <person name="Bradford A.P."/>
            <person name="Aitken A."/>
            <person name="Beg F."/>
            <person name="Cook K.G."/>
            <person name="Yeaman S.J."/>
        </authorList>
    </citation>
    <scope>PROTEIN SEQUENCE OF 107-122</scope>
    <scope>LIPOYLATION AT LYS-111</scope>
    <source>
        <tissue>Kidney</tissue>
    </source>
</reference>
<reference key="3">
    <citation type="journal article" date="2023" name="Open Biol.">
        <title>MRPS36 provides a structural link in the eukaryotic 2-oxoglutarate dehydrogenase complex.</title>
        <authorList>
            <person name="Hevler J.F."/>
            <person name="Albanese P."/>
            <person name="Cabrera-Orefice A."/>
            <person name="Potter A."/>
            <person name="Jankevics A."/>
            <person name="Misic J."/>
            <person name="Scheltema R.A."/>
            <person name="Brandt U."/>
            <person name="Arnold S."/>
            <person name="Heck A.J.R."/>
        </authorList>
    </citation>
    <scope>SUBCELLULAR LOCATION</scope>
    <scope>SUBUNIT</scope>
</reference>
<keyword id="KW-0002">3D-structure</keyword>
<keyword id="KW-0007">Acetylation</keyword>
<keyword id="KW-0012">Acyltransferase</keyword>
<keyword id="KW-0903">Direct protein sequencing</keyword>
<keyword id="KW-0450">Lipoyl</keyword>
<keyword id="KW-0496">Mitochondrion</keyword>
<keyword id="KW-0539">Nucleus</keyword>
<keyword id="KW-0597">Phosphoprotein</keyword>
<keyword id="KW-1185">Reference proteome</keyword>
<keyword id="KW-0808">Transferase</keyword>
<keyword id="KW-0809">Transit peptide</keyword>
<keyword id="KW-0816">Tricarboxylic acid cycle</keyword>
<organism>
    <name type="scientific">Bos taurus</name>
    <name type="common">Bovine</name>
    <dbReference type="NCBI Taxonomy" id="9913"/>
    <lineage>
        <taxon>Eukaryota</taxon>
        <taxon>Metazoa</taxon>
        <taxon>Chordata</taxon>
        <taxon>Craniata</taxon>
        <taxon>Vertebrata</taxon>
        <taxon>Euteleostomi</taxon>
        <taxon>Mammalia</taxon>
        <taxon>Eutheria</taxon>
        <taxon>Laurasiatheria</taxon>
        <taxon>Artiodactyla</taxon>
        <taxon>Ruminantia</taxon>
        <taxon>Pecora</taxon>
        <taxon>Bovidae</taxon>
        <taxon>Bovinae</taxon>
        <taxon>Bos</taxon>
    </lineage>
</organism>
<dbReference type="EC" id="2.3.1.61" evidence="2"/>
<dbReference type="EMBL" id="BT026207">
    <property type="protein sequence ID" value="ABG67046.1"/>
    <property type="molecule type" value="mRNA"/>
</dbReference>
<dbReference type="PIR" id="S00123">
    <property type="entry name" value="S00123"/>
</dbReference>
<dbReference type="RefSeq" id="NP_001068750.1">
    <property type="nucleotide sequence ID" value="NM_001075282.1"/>
</dbReference>
<dbReference type="PDB" id="7UOL">
    <property type="method" value="EM"/>
    <property type="resolution" value="3.50 A"/>
    <property type="chains" value="D/E/F/J/K/L/M/N/O/P/Q/R/S/T/U/V/W/X/Y/Z/a/b/c/d=1-455"/>
</dbReference>
<dbReference type="PDBsum" id="7UOL"/>
<dbReference type="EMDB" id="EMD-26649"/>
<dbReference type="SMR" id="P11179"/>
<dbReference type="FunCoup" id="P11179">
    <property type="interactions" value="3050"/>
</dbReference>
<dbReference type="IntAct" id="P11179">
    <property type="interactions" value="1"/>
</dbReference>
<dbReference type="STRING" id="9913.ENSBTAP00000073668"/>
<dbReference type="PaxDb" id="9913-ENSBTAP00000008473"/>
<dbReference type="PeptideAtlas" id="P11179"/>
<dbReference type="GeneID" id="506888"/>
<dbReference type="KEGG" id="bta:506888"/>
<dbReference type="CTD" id="1743"/>
<dbReference type="eggNOG" id="KOG0559">
    <property type="taxonomic scope" value="Eukaryota"/>
</dbReference>
<dbReference type="InParanoid" id="P11179"/>
<dbReference type="OrthoDB" id="5391403at2759"/>
<dbReference type="UniPathway" id="UPA00223"/>
<dbReference type="UniPathway" id="UPA00868">
    <property type="reaction ID" value="UER00840"/>
</dbReference>
<dbReference type="Proteomes" id="UP000009136">
    <property type="component" value="Unplaced"/>
</dbReference>
<dbReference type="GO" id="GO:0005759">
    <property type="term" value="C:mitochondrial matrix"/>
    <property type="evidence" value="ECO:0007669"/>
    <property type="project" value="UniProtKB-SubCell"/>
</dbReference>
<dbReference type="GO" id="GO:0005739">
    <property type="term" value="C:mitochondrion"/>
    <property type="evidence" value="ECO:0000250"/>
    <property type="project" value="UniProtKB"/>
</dbReference>
<dbReference type="GO" id="GO:0005634">
    <property type="term" value="C:nucleus"/>
    <property type="evidence" value="ECO:0000250"/>
    <property type="project" value="UniProtKB"/>
</dbReference>
<dbReference type="GO" id="GO:0045252">
    <property type="term" value="C:oxoglutarate dehydrogenase complex"/>
    <property type="evidence" value="ECO:0000250"/>
    <property type="project" value="UniProtKB"/>
</dbReference>
<dbReference type="GO" id="GO:0016746">
    <property type="term" value="F:acyltransferase activity"/>
    <property type="evidence" value="ECO:0000250"/>
    <property type="project" value="UniProtKB"/>
</dbReference>
<dbReference type="GO" id="GO:0004149">
    <property type="term" value="F:dihydrolipoyllysine-residue succinyltransferase activity"/>
    <property type="evidence" value="ECO:0000250"/>
    <property type="project" value="UniProtKB"/>
</dbReference>
<dbReference type="GO" id="GO:0006103">
    <property type="term" value="P:2-oxoglutarate metabolic process"/>
    <property type="evidence" value="ECO:0000250"/>
    <property type="project" value="UniProtKB"/>
</dbReference>
<dbReference type="GO" id="GO:0033512">
    <property type="term" value="P:L-lysine catabolic process to acetyl-CoA via saccharopine"/>
    <property type="evidence" value="ECO:0007669"/>
    <property type="project" value="UniProtKB-UniPathway"/>
</dbReference>
<dbReference type="GO" id="GO:0006104">
    <property type="term" value="P:succinyl-CoA metabolic process"/>
    <property type="evidence" value="ECO:0000250"/>
    <property type="project" value="UniProtKB"/>
</dbReference>
<dbReference type="GO" id="GO:0006099">
    <property type="term" value="P:tricarboxylic acid cycle"/>
    <property type="evidence" value="ECO:0000250"/>
    <property type="project" value="UniProtKB"/>
</dbReference>
<dbReference type="CDD" id="cd06849">
    <property type="entry name" value="lipoyl_domain"/>
    <property type="match status" value="1"/>
</dbReference>
<dbReference type="FunFam" id="2.40.50.100:FF:000033">
    <property type="entry name" value="Dihydrolipoyllysine-residue succinyltransferase component of 2-oxoglutarate dehydrogenase complex, mitochondrial"/>
    <property type="match status" value="1"/>
</dbReference>
<dbReference type="FunFam" id="3.30.559.10:FF:000006">
    <property type="entry name" value="Dihydrolipoyllysine-residue succinyltransferase component of 2-oxoglutarate dehydrogenase complex, mitochondrial"/>
    <property type="match status" value="1"/>
</dbReference>
<dbReference type="Gene3D" id="2.40.50.100">
    <property type="match status" value="1"/>
</dbReference>
<dbReference type="Gene3D" id="3.30.559.10">
    <property type="entry name" value="Chloramphenicol acetyltransferase-like domain"/>
    <property type="match status" value="1"/>
</dbReference>
<dbReference type="InterPro" id="IPR003016">
    <property type="entry name" value="2-oxoA_DH_lipoyl-BS"/>
</dbReference>
<dbReference type="InterPro" id="IPR050537">
    <property type="entry name" value="2-oxoacid_dehydrogenase"/>
</dbReference>
<dbReference type="InterPro" id="IPR001078">
    <property type="entry name" value="2-oxoacid_DH_actylTfrase"/>
</dbReference>
<dbReference type="InterPro" id="IPR000089">
    <property type="entry name" value="Biotin_lipoyl"/>
</dbReference>
<dbReference type="InterPro" id="IPR023213">
    <property type="entry name" value="CAT-like_dom_sf"/>
</dbReference>
<dbReference type="InterPro" id="IPR011053">
    <property type="entry name" value="Single_hybrid_motif"/>
</dbReference>
<dbReference type="InterPro" id="IPR006255">
    <property type="entry name" value="SucB"/>
</dbReference>
<dbReference type="NCBIfam" id="TIGR01347">
    <property type="entry name" value="sucB"/>
    <property type="match status" value="1"/>
</dbReference>
<dbReference type="PANTHER" id="PTHR43416:SF5">
    <property type="entry name" value="DIHYDROLIPOYLLYSINE-RESIDUE SUCCINYLTRANSFERASE COMPONENT OF 2-OXOGLUTARATE DEHYDROGENASE COMPLEX, MITOCHONDRIAL"/>
    <property type="match status" value="1"/>
</dbReference>
<dbReference type="PANTHER" id="PTHR43416">
    <property type="entry name" value="DIHYDROLIPOYLLYSINE-RESIDUE SUCCINYLTRANSFERASE COMPONENT OF 2-OXOGLUTARATE DEHYDROGENASE COMPLEX, MITOCHONDRIAL-RELATED"/>
    <property type="match status" value="1"/>
</dbReference>
<dbReference type="Pfam" id="PF00198">
    <property type="entry name" value="2-oxoacid_dh"/>
    <property type="match status" value="1"/>
</dbReference>
<dbReference type="Pfam" id="PF00364">
    <property type="entry name" value="Biotin_lipoyl"/>
    <property type="match status" value="1"/>
</dbReference>
<dbReference type="SUPFAM" id="SSF52777">
    <property type="entry name" value="CoA-dependent acyltransferases"/>
    <property type="match status" value="1"/>
</dbReference>
<dbReference type="SUPFAM" id="SSF51230">
    <property type="entry name" value="Single hybrid motif"/>
    <property type="match status" value="1"/>
</dbReference>
<dbReference type="PROSITE" id="PS50968">
    <property type="entry name" value="BIOTINYL_LIPOYL"/>
    <property type="match status" value="1"/>
</dbReference>
<dbReference type="PROSITE" id="PS00189">
    <property type="entry name" value="LIPOYL"/>
    <property type="match status" value="1"/>
</dbReference>
<accession>P11179</accession>
<accession>Q0V8L1</accession>